<gene>
    <name type="primary">PHM6</name>
    <name type="ordered locus">YDR281C</name>
    <name type="ORF">D9954.14</name>
</gene>
<proteinExistence type="evidence at protein level"/>
<evidence type="ECO:0000255" key="1"/>
<evidence type="ECO:0000269" key="2">
    <source>
    </source>
</evidence>
<evidence type="ECO:0000305" key="3"/>
<name>PHM6_YEAST</name>
<dbReference type="EMBL" id="U51030">
    <property type="protein sequence ID" value="AAB64459.1"/>
    <property type="molecule type" value="Genomic_DNA"/>
</dbReference>
<dbReference type="EMBL" id="AY557721">
    <property type="protein sequence ID" value="AAS56047.1"/>
    <property type="molecule type" value="Genomic_DNA"/>
</dbReference>
<dbReference type="EMBL" id="BK006938">
    <property type="protein sequence ID" value="DAA12121.1"/>
    <property type="molecule type" value="Genomic_DNA"/>
</dbReference>
<dbReference type="PIR" id="S70137">
    <property type="entry name" value="S70137"/>
</dbReference>
<dbReference type="RefSeq" id="NP_010567.1">
    <property type="nucleotide sequence ID" value="NM_001180589.1"/>
</dbReference>
<dbReference type="SMR" id="Q05637"/>
<dbReference type="BioGRID" id="32334">
    <property type="interactions" value="71"/>
</dbReference>
<dbReference type="DIP" id="DIP-4775N"/>
<dbReference type="FunCoup" id="Q05637">
    <property type="interactions" value="125"/>
</dbReference>
<dbReference type="IntAct" id="Q05637">
    <property type="interactions" value="1"/>
</dbReference>
<dbReference type="STRING" id="4932.YDR281C"/>
<dbReference type="PaxDb" id="4932-YDR281C"/>
<dbReference type="PeptideAtlas" id="Q05637"/>
<dbReference type="EnsemblFungi" id="YDR281C_mRNA">
    <property type="protein sequence ID" value="YDR281C"/>
    <property type="gene ID" value="YDR281C"/>
</dbReference>
<dbReference type="GeneID" id="851875"/>
<dbReference type="KEGG" id="sce:YDR281C"/>
<dbReference type="AGR" id="SGD:S000002689"/>
<dbReference type="SGD" id="S000002689">
    <property type="gene designation" value="PHM6"/>
</dbReference>
<dbReference type="VEuPathDB" id="FungiDB:YDR281C"/>
<dbReference type="HOGENOM" id="CLU_160174_0_0_1"/>
<dbReference type="InParanoid" id="Q05637"/>
<dbReference type="OrthoDB" id="4055998at2759"/>
<dbReference type="BioCyc" id="YEAST:G3O-29846-MONOMER"/>
<dbReference type="BioGRID-ORCS" id="851875">
    <property type="hits" value="2 hits in 10 CRISPR screens"/>
</dbReference>
<dbReference type="PRO" id="PR:Q05637"/>
<dbReference type="Proteomes" id="UP000002311">
    <property type="component" value="Chromosome IV"/>
</dbReference>
<dbReference type="RNAct" id="Q05637">
    <property type="molecule type" value="protein"/>
</dbReference>
<dbReference type="GO" id="GO:0000324">
    <property type="term" value="C:fungal-type vacuole"/>
    <property type="evidence" value="ECO:0007005"/>
    <property type="project" value="SGD"/>
</dbReference>
<dbReference type="GO" id="GO:0005774">
    <property type="term" value="C:vacuolar membrane"/>
    <property type="evidence" value="ECO:0007669"/>
    <property type="project" value="UniProtKB-SubCell"/>
</dbReference>
<dbReference type="GO" id="GO:0006817">
    <property type="term" value="P:phosphate ion transport"/>
    <property type="evidence" value="ECO:0000315"/>
    <property type="project" value="SGD"/>
</dbReference>
<feature type="chain" id="PRO_0000262734" description="Phosphate metabolism protein 6">
    <location>
        <begin position="1"/>
        <end position="104"/>
    </location>
</feature>
<feature type="transmembrane region" description="Helical" evidence="1">
    <location>
        <begin position="76"/>
        <end position="96"/>
    </location>
</feature>
<reference key="1">
    <citation type="journal article" date="1997" name="Nature">
        <title>The nucleotide sequence of Saccharomyces cerevisiae chromosome IV.</title>
        <authorList>
            <person name="Jacq C."/>
            <person name="Alt-Moerbe J."/>
            <person name="Andre B."/>
            <person name="Arnold W."/>
            <person name="Bahr A."/>
            <person name="Ballesta J.P.G."/>
            <person name="Bargues M."/>
            <person name="Baron L."/>
            <person name="Becker A."/>
            <person name="Biteau N."/>
            <person name="Bloecker H."/>
            <person name="Blugeon C."/>
            <person name="Boskovic J."/>
            <person name="Brandt P."/>
            <person name="Brueckner M."/>
            <person name="Buitrago M.J."/>
            <person name="Coster F."/>
            <person name="Delaveau T."/>
            <person name="del Rey F."/>
            <person name="Dujon B."/>
            <person name="Eide L.G."/>
            <person name="Garcia-Cantalejo J.M."/>
            <person name="Goffeau A."/>
            <person name="Gomez-Peris A."/>
            <person name="Granotier C."/>
            <person name="Hanemann V."/>
            <person name="Hankeln T."/>
            <person name="Hoheisel J.D."/>
            <person name="Jaeger W."/>
            <person name="Jimenez A."/>
            <person name="Jonniaux J.-L."/>
            <person name="Kraemer C."/>
            <person name="Kuester H."/>
            <person name="Laamanen P."/>
            <person name="Legros Y."/>
            <person name="Louis E.J."/>
            <person name="Moeller-Rieker S."/>
            <person name="Monnet A."/>
            <person name="Moro M."/>
            <person name="Mueller-Auer S."/>
            <person name="Nussbaumer B."/>
            <person name="Paricio N."/>
            <person name="Paulin L."/>
            <person name="Perea J."/>
            <person name="Perez-Alonso M."/>
            <person name="Perez-Ortin J.E."/>
            <person name="Pohl T.M."/>
            <person name="Prydz H."/>
            <person name="Purnelle B."/>
            <person name="Rasmussen S.W."/>
            <person name="Remacha M.A."/>
            <person name="Revuelta J.L."/>
            <person name="Rieger M."/>
            <person name="Salom D."/>
            <person name="Saluz H.P."/>
            <person name="Saiz J.E."/>
            <person name="Saren A.-M."/>
            <person name="Schaefer M."/>
            <person name="Scharfe M."/>
            <person name="Schmidt E.R."/>
            <person name="Schneider C."/>
            <person name="Scholler P."/>
            <person name="Schwarz S."/>
            <person name="Soler-Mira A."/>
            <person name="Urrestarazu L.A."/>
            <person name="Verhasselt P."/>
            <person name="Vissers S."/>
            <person name="Voet M."/>
            <person name="Volckaert G."/>
            <person name="Wagner G."/>
            <person name="Wambutt R."/>
            <person name="Wedler E."/>
            <person name="Wedler H."/>
            <person name="Woelfl S."/>
            <person name="Harris D.E."/>
            <person name="Bowman S."/>
            <person name="Brown D."/>
            <person name="Churcher C.M."/>
            <person name="Connor R."/>
            <person name="Dedman K."/>
            <person name="Gentles S."/>
            <person name="Hamlin N."/>
            <person name="Hunt S."/>
            <person name="Jones L."/>
            <person name="McDonald S."/>
            <person name="Murphy L.D."/>
            <person name="Niblett D."/>
            <person name="Odell C."/>
            <person name="Oliver K."/>
            <person name="Rajandream M.A."/>
            <person name="Richards C."/>
            <person name="Shore L."/>
            <person name="Walsh S.V."/>
            <person name="Barrell B.G."/>
            <person name="Dietrich F.S."/>
            <person name="Mulligan J.T."/>
            <person name="Allen E."/>
            <person name="Araujo R."/>
            <person name="Aviles E."/>
            <person name="Berno A."/>
            <person name="Carpenter J."/>
            <person name="Chen E."/>
            <person name="Cherry J.M."/>
            <person name="Chung E."/>
            <person name="Duncan M."/>
            <person name="Hunicke-Smith S."/>
            <person name="Hyman R.W."/>
            <person name="Komp C."/>
            <person name="Lashkari D."/>
            <person name="Lew H."/>
            <person name="Lin D."/>
            <person name="Mosedale D."/>
            <person name="Nakahara K."/>
            <person name="Namath A."/>
            <person name="Oefner P."/>
            <person name="Oh C."/>
            <person name="Petel F.X."/>
            <person name="Roberts D."/>
            <person name="Schramm S."/>
            <person name="Schroeder M."/>
            <person name="Shogren T."/>
            <person name="Shroff N."/>
            <person name="Winant A."/>
            <person name="Yelton M.A."/>
            <person name="Botstein D."/>
            <person name="Davis R.W."/>
            <person name="Johnston M."/>
            <person name="Andrews S."/>
            <person name="Brinkman R."/>
            <person name="Cooper J."/>
            <person name="Ding H."/>
            <person name="Du Z."/>
            <person name="Favello A."/>
            <person name="Fulton L."/>
            <person name="Gattung S."/>
            <person name="Greco T."/>
            <person name="Hallsworth K."/>
            <person name="Hawkins J."/>
            <person name="Hillier L.W."/>
            <person name="Jier M."/>
            <person name="Johnson D."/>
            <person name="Johnston L."/>
            <person name="Kirsten J."/>
            <person name="Kucaba T."/>
            <person name="Langston Y."/>
            <person name="Latreille P."/>
            <person name="Le T."/>
            <person name="Mardis E."/>
            <person name="Menezes S."/>
            <person name="Miller N."/>
            <person name="Nhan M."/>
            <person name="Pauley A."/>
            <person name="Peluso D."/>
            <person name="Rifkin L."/>
            <person name="Riles L."/>
            <person name="Taich A."/>
            <person name="Trevaskis E."/>
            <person name="Vignati D."/>
            <person name="Wilcox L."/>
            <person name="Wohldman P."/>
            <person name="Vaudin M."/>
            <person name="Wilson R."/>
            <person name="Waterston R."/>
            <person name="Albermann K."/>
            <person name="Hani J."/>
            <person name="Heumann K."/>
            <person name="Kleine K."/>
            <person name="Mewes H.-W."/>
            <person name="Zollner A."/>
            <person name="Zaccaria P."/>
        </authorList>
    </citation>
    <scope>NUCLEOTIDE SEQUENCE [LARGE SCALE GENOMIC DNA]</scope>
    <source>
        <strain>ATCC 204508 / S288c</strain>
    </source>
</reference>
<reference key="2">
    <citation type="journal article" date="2014" name="G3 (Bethesda)">
        <title>The reference genome sequence of Saccharomyces cerevisiae: Then and now.</title>
        <authorList>
            <person name="Engel S.R."/>
            <person name="Dietrich F.S."/>
            <person name="Fisk D.G."/>
            <person name="Binkley G."/>
            <person name="Balakrishnan R."/>
            <person name="Costanzo M.C."/>
            <person name="Dwight S.S."/>
            <person name="Hitz B.C."/>
            <person name="Karra K."/>
            <person name="Nash R.S."/>
            <person name="Weng S."/>
            <person name="Wong E.D."/>
            <person name="Lloyd P."/>
            <person name="Skrzypek M.S."/>
            <person name="Miyasato S.R."/>
            <person name="Simison M."/>
            <person name="Cherry J.M."/>
        </authorList>
    </citation>
    <scope>GENOME REANNOTATION</scope>
    <source>
        <strain>ATCC 204508 / S288c</strain>
    </source>
</reference>
<reference key="3">
    <citation type="journal article" date="2007" name="Genome Res.">
        <title>Approaching a complete repository of sequence-verified protein-encoding clones for Saccharomyces cerevisiae.</title>
        <authorList>
            <person name="Hu Y."/>
            <person name="Rolfs A."/>
            <person name="Bhullar B."/>
            <person name="Murthy T.V.S."/>
            <person name="Zhu C."/>
            <person name="Berger M.F."/>
            <person name="Camargo A.A."/>
            <person name="Kelley F."/>
            <person name="McCarron S."/>
            <person name="Jepson D."/>
            <person name="Richardson A."/>
            <person name="Raphael J."/>
            <person name="Moreira D."/>
            <person name="Taycher E."/>
            <person name="Zuo D."/>
            <person name="Mohr S."/>
            <person name="Kane M.F."/>
            <person name="Williamson J."/>
            <person name="Simpson A.J.G."/>
            <person name="Bulyk M.L."/>
            <person name="Harlow E."/>
            <person name="Marsischky G."/>
            <person name="Kolodner R.D."/>
            <person name="LaBaer J."/>
        </authorList>
    </citation>
    <scope>NUCLEOTIDE SEQUENCE [GENOMIC DNA]</scope>
    <source>
        <strain>ATCC 204508 / S288c</strain>
    </source>
</reference>
<reference key="4">
    <citation type="journal article" date="2000" name="Mol. Biol. Cell">
        <title>New components of a system for phosphate accumulation and polyphosphate metabolism in Saccharomyces cerevisiae revealed by genomic expression analysis.</title>
        <authorList>
            <person name="Ogawa N."/>
            <person name="DeRisi J.L."/>
            <person name="Brown P.O."/>
        </authorList>
    </citation>
    <scope>INDUCTION</scope>
</reference>
<reference key="5">
    <citation type="journal article" date="2003" name="Nature">
        <title>Global analysis of protein localization in budding yeast.</title>
        <authorList>
            <person name="Huh W.-K."/>
            <person name="Falvo J.V."/>
            <person name="Gerke L.C."/>
            <person name="Carroll A.S."/>
            <person name="Howson R.W."/>
            <person name="Weissman J.S."/>
            <person name="O'Shea E.K."/>
        </authorList>
    </citation>
    <scope>SUBCELLULAR LOCATION [LARGE SCALE ANALYSIS]</scope>
</reference>
<organism>
    <name type="scientific">Saccharomyces cerevisiae (strain ATCC 204508 / S288c)</name>
    <name type="common">Baker's yeast</name>
    <dbReference type="NCBI Taxonomy" id="559292"/>
    <lineage>
        <taxon>Eukaryota</taxon>
        <taxon>Fungi</taxon>
        <taxon>Dikarya</taxon>
        <taxon>Ascomycota</taxon>
        <taxon>Saccharomycotina</taxon>
        <taxon>Saccharomycetes</taxon>
        <taxon>Saccharomycetales</taxon>
        <taxon>Saccharomycetaceae</taxon>
        <taxon>Saccharomyces</taxon>
    </lineage>
</organism>
<protein>
    <recommendedName>
        <fullName>Phosphate metabolism protein 6</fullName>
    </recommendedName>
</protein>
<sequence>MEDTSRCIDDVLKIGQQEKEIRQAEFSDAQGEREEVKCIDYTVDLEAGLPRHESSGKSNTLKQCYNAVLGFLEELIIVIIIVLLLYSLTMVGLFYVMTMTKFLF</sequence>
<comment type="subcellular location">
    <subcellularLocation>
        <location evidence="3">Vacuole membrane</location>
        <topology evidence="3">Single-pass membrane protein</topology>
    </subcellularLocation>
</comment>
<comment type="induction">
    <text evidence="2">Regulated by phosphate levels.</text>
</comment>
<keyword id="KW-0472">Membrane</keyword>
<keyword id="KW-1185">Reference proteome</keyword>
<keyword id="KW-0812">Transmembrane</keyword>
<keyword id="KW-1133">Transmembrane helix</keyword>
<keyword id="KW-0926">Vacuole</keyword>
<accession>Q05637</accession>
<accession>D6VSR1</accession>